<name>LPOA_PHOPR</name>
<feature type="signal peptide" evidence="1">
    <location>
        <begin position="1"/>
        <end position="29"/>
    </location>
</feature>
<feature type="chain" id="PRO_0000405941" description="Penicillin-binding protein activator LpoA">
    <location>
        <begin position="30"/>
        <end position="613"/>
    </location>
</feature>
<feature type="lipid moiety-binding region" description="N-palmitoyl cysteine" evidence="1">
    <location>
        <position position="30"/>
    </location>
</feature>
<feature type="lipid moiety-binding region" description="S-diacylglycerol cysteine" evidence="1">
    <location>
        <position position="30"/>
    </location>
</feature>
<dbReference type="EMBL" id="CR378673">
    <property type="protein sequence ID" value="CAG21533.1"/>
    <property type="molecule type" value="Genomic_DNA"/>
</dbReference>
<dbReference type="SMR" id="Q6LME4"/>
<dbReference type="STRING" id="298386.PBPRA3227"/>
<dbReference type="KEGG" id="ppr:PBPRA3227"/>
<dbReference type="eggNOG" id="COG3107">
    <property type="taxonomic scope" value="Bacteria"/>
</dbReference>
<dbReference type="HOGENOM" id="CLU_026091_1_0_6"/>
<dbReference type="Proteomes" id="UP000000593">
    <property type="component" value="Chromosome 1"/>
</dbReference>
<dbReference type="GO" id="GO:0031241">
    <property type="term" value="C:periplasmic side of cell outer membrane"/>
    <property type="evidence" value="ECO:0007669"/>
    <property type="project" value="UniProtKB-UniRule"/>
</dbReference>
<dbReference type="GO" id="GO:0030234">
    <property type="term" value="F:enzyme regulator activity"/>
    <property type="evidence" value="ECO:0007669"/>
    <property type="project" value="UniProtKB-UniRule"/>
</dbReference>
<dbReference type="GO" id="GO:0009252">
    <property type="term" value="P:peptidoglycan biosynthetic process"/>
    <property type="evidence" value="ECO:0007669"/>
    <property type="project" value="UniProtKB-UniRule"/>
</dbReference>
<dbReference type="GO" id="GO:0008360">
    <property type="term" value="P:regulation of cell shape"/>
    <property type="evidence" value="ECO:0007669"/>
    <property type="project" value="UniProtKB-KW"/>
</dbReference>
<dbReference type="CDD" id="cd06339">
    <property type="entry name" value="PBP1_YraM_LppC_lipoprotein-like"/>
    <property type="match status" value="1"/>
</dbReference>
<dbReference type="Gene3D" id="1.25.40.650">
    <property type="match status" value="1"/>
</dbReference>
<dbReference type="Gene3D" id="3.40.50.2300">
    <property type="match status" value="2"/>
</dbReference>
<dbReference type="Gene3D" id="1.25.40.10">
    <property type="entry name" value="Tetratricopeptide repeat domain"/>
    <property type="match status" value="1"/>
</dbReference>
<dbReference type="HAMAP" id="MF_01890">
    <property type="entry name" value="LpoA"/>
    <property type="match status" value="1"/>
</dbReference>
<dbReference type="InterPro" id="IPR007443">
    <property type="entry name" value="LpoA"/>
</dbReference>
<dbReference type="InterPro" id="IPR028082">
    <property type="entry name" value="Peripla_BP_I"/>
</dbReference>
<dbReference type="InterPro" id="IPR011990">
    <property type="entry name" value="TPR-like_helical_dom_sf"/>
</dbReference>
<dbReference type="PANTHER" id="PTHR38038">
    <property type="entry name" value="PENICILLIN-BINDING PROTEIN ACTIVATOR LPOA"/>
    <property type="match status" value="1"/>
</dbReference>
<dbReference type="PANTHER" id="PTHR38038:SF1">
    <property type="entry name" value="PENICILLIN-BINDING PROTEIN ACTIVATOR LPOA"/>
    <property type="match status" value="1"/>
</dbReference>
<dbReference type="Pfam" id="PF04348">
    <property type="entry name" value="LppC"/>
    <property type="match status" value="1"/>
</dbReference>
<dbReference type="SUPFAM" id="SSF53822">
    <property type="entry name" value="Periplasmic binding protein-like I"/>
    <property type="match status" value="1"/>
</dbReference>
<gene>
    <name evidence="1" type="primary">lpoA</name>
    <name type="ordered locus">PBPRA3227</name>
</gene>
<keyword id="KW-0998">Cell outer membrane</keyword>
<keyword id="KW-0133">Cell shape</keyword>
<keyword id="KW-0449">Lipoprotein</keyword>
<keyword id="KW-0472">Membrane</keyword>
<keyword id="KW-0564">Palmitate</keyword>
<keyword id="KW-0573">Peptidoglycan synthesis</keyword>
<keyword id="KW-1185">Reference proteome</keyword>
<keyword id="KW-0732">Signal</keyword>
<reference key="1">
    <citation type="journal article" date="2005" name="Science">
        <title>Life at depth: Photobacterium profundum genome sequence and expression analysis.</title>
        <authorList>
            <person name="Vezzi A."/>
            <person name="Campanaro S."/>
            <person name="D'Angelo M."/>
            <person name="Simonato F."/>
            <person name="Vitulo N."/>
            <person name="Lauro F.M."/>
            <person name="Cestaro A."/>
            <person name="Malacrida G."/>
            <person name="Simionati B."/>
            <person name="Cannata N."/>
            <person name="Romualdi C."/>
            <person name="Bartlett D.H."/>
            <person name="Valle G."/>
        </authorList>
    </citation>
    <scope>NUCLEOTIDE SEQUENCE [LARGE SCALE GENOMIC DNA]</scope>
    <source>
        <strain>ATCC BAA-1253 / SS9</strain>
    </source>
</reference>
<sequence length="613" mass="69215">MNSMLNFTHKRKSVSRLLAPVALAVILAGCSSSNQQQASASNITAIATDTSANYLIKAESSDGIESIDWNILALKALIKEGQWTQADNQSKRLSRMSLSPIQMAEWQLARATLRYQQGQLQEALNTLNFQPWWPLPDNQYKRYFMLRAELLGQLGQHSKAARQRTMLDQYLPSNQKNANWQNLWQDLSSYNNSQLQSVSLKEDETVLRGWIQLSILKNTYSQRPVRLKSAVDEWLSMNPYHPAHQYLPTELEAIMSMEVAQLDNVALLLPLTGRFESQGKAVRDGFINAMLDDTSRDTDTELTVFDTEAESMTAIMAKLQANGTQFVIGPLRKEKVTAFQQSNTSQINLLALNQPEQLDVSQTQSCYFSLSPEQEAEQAAQHLFAKGHQYPLVLAPKSKFGQRMTDAFNEQWQQLTGRNADIDTFGSRKQIQQQISRIFGLNDSQARISQMNQLTGVKLESQQRSRRDTDAVYLIANKSELTLLKPFIEVAINPEVKPPKLYASSRGNPNANSDNSELRGIEFSDIPLIINPELSFMERFDSLWPNESNTSIRLHAFGMDAYKMVNELPQLRVVDNYTVQGMTGQLGIDNQCVVQREMDWAVFTSDGITPAAE</sequence>
<organism>
    <name type="scientific">Photobacterium profundum (strain SS9)</name>
    <dbReference type="NCBI Taxonomy" id="298386"/>
    <lineage>
        <taxon>Bacteria</taxon>
        <taxon>Pseudomonadati</taxon>
        <taxon>Pseudomonadota</taxon>
        <taxon>Gammaproteobacteria</taxon>
        <taxon>Vibrionales</taxon>
        <taxon>Vibrionaceae</taxon>
        <taxon>Photobacterium</taxon>
    </lineage>
</organism>
<protein>
    <recommendedName>
        <fullName evidence="1">Penicillin-binding protein activator LpoA</fullName>
        <shortName evidence="1">PBP activator LpoA</shortName>
    </recommendedName>
</protein>
<proteinExistence type="inferred from homology"/>
<evidence type="ECO:0000255" key="1">
    <source>
        <dbReference type="HAMAP-Rule" id="MF_01890"/>
    </source>
</evidence>
<accession>Q6LME4</accession>
<comment type="function">
    <text evidence="1">Regulator of peptidoglycan synthesis that is essential for the function of penicillin-binding protein 1A (PBP1a).</text>
</comment>
<comment type="subunit">
    <text evidence="1">Interacts with PBP1a.</text>
</comment>
<comment type="subcellular location">
    <subcellularLocation>
        <location evidence="1">Cell outer membrane</location>
        <topology evidence="1">Lipid-anchor</topology>
        <orientation evidence="1">Periplasmic side</orientation>
    </subcellularLocation>
</comment>
<comment type="similarity">
    <text evidence="1">Belongs to the LpoA family.</text>
</comment>